<gene>
    <name evidence="4" type="primary">csm3</name>
</gene>
<sequence>MTFAKIKFSAQIRLETGLHIGGSDAFAAIGAIDSPVIKDPITNIPIIPGSSLKGKMRTLLAKVYNEKVAEKPSDDSDILSRLFGNSKDKRFKMGRLIFRDAFLSNADELDSLGVRSYTEVKFENTIDRITAEANPRQIERAIRNSTFDFELIYEITDENENQVEEDFKVIRDGLKLLELDYLGGSGSRGYGKVAFEKLKATTVFGNYDVKTLNELLTAEV</sequence>
<name>CSM3_STRTR</name>
<dbReference type="EC" id="3.1.-.-" evidence="1"/>
<dbReference type="EMBL" id="KM222358">
    <property type="protein sequence ID" value="AIZ03606.1"/>
    <property type="molecule type" value="Genomic_DNA"/>
</dbReference>
<dbReference type="RefSeq" id="WP_011681112.1">
    <property type="nucleotide sequence ID" value="NZ_RIIY01000107.1"/>
</dbReference>
<dbReference type="PDB" id="6NUD">
    <property type="method" value="EM"/>
    <property type="resolution" value="3.50 A"/>
    <property type="chains" value="C/E/N/O/P=1-220"/>
</dbReference>
<dbReference type="PDB" id="6NUE">
    <property type="method" value="EM"/>
    <property type="resolution" value="3.30 A"/>
    <property type="chains" value="C/E/N/O/P=1-220"/>
</dbReference>
<dbReference type="PDBsum" id="6NUD"/>
<dbReference type="PDBsum" id="6NUE"/>
<dbReference type="EMDB" id="EMD-0516"/>
<dbReference type="EMDB" id="EMD-0519"/>
<dbReference type="SMR" id="A0A0A7HIF0"/>
<dbReference type="PATRIC" id="fig|1308.45.peg.983"/>
<dbReference type="eggNOG" id="COG1337">
    <property type="taxonomic scope" value="Bacteria"/>
</dbReference>
<dbReference type="OrthoDB" id="9789361at2"/>
<dbReference type="GO" id="GO:0004519">
    <property type="term" value="F:endonuclease activity"/>
    <property type="evidence" value="ECO:0007669"/>
    <property type="project" value="UniProtKB-KW"/>
</dbReference>
<dbReference type="GO" id="GO:0003723">
    <property type="term" value="F:RNA binding"/>
    <property type="evidence" value="ECO:0007669"/>
    <property type="project" value="UniProtKB-KW"/>
</dbReference>
<dbReference type="GO" id="GO:0051607">
    <property type="term" value="P:defense response to virus"/>
    <property type="evidence" value="ECO:0007669"/>
    <property type="project" value="UniProtKB-KW"/>
</dbReference>
<dbReference type="InterPro" id="IPR013412">
    <property type="entry name" value="CRISPR-assoc_RAMP_Csm3"/>
</dbReference>
<dbReference type="InterPro" id="IPR052216">
    <property type="entry name" value="CRISPR_Csm3_endoribonuclease"/>
</dbReference>
<dbReference type="InterPro" id="IPR005537">
    <property type="entry name" value="RAMP_III_fam"/>
</dbReference>
<dbReference type="NCBIfam" id="TIGR02582">
    <property type="entry name" value="cas7_TM1809"/>
    <property type="match status" value="1"/>
</dbReference>
<dbReference type="PANTHER" id="PTHR35579">
    <property type="entry name" value="CRISPR SYSTEM CMS ENDORIBONUCLEASE CSM3"/>
    <property type="match status" value="1"/>
</dbReference>
<dbReference type="PANTHER" id="PTHR35579:SF3">
    <property type="entry name" value="CRISPR SYSTEM CMS ENDORIBONUCLEASE CSM3"/>
    <property type="match status" value="1"/>
</dbReference>
<dbReference type="Pfam" id="PF03787">
    <property type="entry name" value="RAMPs"/>
    <property type="match status" value="1"/>
</dbReference>
<comment type="function">
    <text evidence="1">CRISPR (clustered regularly interspaced short palindromic repeat) is an adaptive immune system that provides protection against mobile genetic elements (viruses, transposable elements and conjugative plasmids). CRISPR clusters contain spacers, sequences complementary to antecedent mobile elements, and target invading nucleic acids. CRISPR clusters are transcribed and processed into CRISPR RNA (crRNA). The type III-A Csm effector complex binds crRNA and acts as a crRNA-guided RNase, DNase and cyclic oligoadenylate synthase; binding of target RNA cognate to the crRNA is required for all activities. In a heterologous host this Csm effector complex restricts ssRNA phage MS2, suggesting it may target RNA viruses in vivo.</text>
</comment>
<comment type="function">
    <text evidence="2">Csm functions as a non-specific ssDNase. Base-pairing between crRNA and target RNA to form a ternary Csm complex activates a ssDNase activity; target RNA cleavage suppresses the ssDNase, a temporal control that prevents uncontrolled DNA degradation. Viral RNA transcripts probably tether the Csm complex to the viral genome, recruiting Cas10 ssDNA activity which is able to degrade DNA in the transcription bubble, spatially controlling the DNase activity.</text>
</comment>
<comment type="function">
    <text evidence="1 2">This subunit has the target ssRNA endonuclease activity; it cleaves multiple sites in the target RNA at 6 nucleotide intervals. The number of cleavage sites in the target RNA correlates with the number of Csm3 subunits in the Csm effector complex (PubMed:25458845). In the Csm complex target RNA and ssDNA are cleaved simultaneously, although RNase activity (of Csm3) is much faster. RNA cleavage by Csm3 is not required for ssDNase activity as Csm complex with inactive Csm3 still has ssDNase activity; however as the cleaved target RNA products dissociate away ssDNase activity decreases (PubMed:27105119).</text>
</comment>
<comment type="cofactor">
    <cofactor evidence="1">
        <name>a metal cation</name>
        <dbReference type="ChEBI" id="CHEBI:25213"/>
    </cofactor>
    <text evidence="1 7">Endonucleolytic cleavage of target ssRNA by the Csm complex requires a divalent metal ion; Mg(2+) has the best activity in vitro, but Mn(2+), Ca(2+), Zn(2+), Ni(2+), and Co(2+) also support cleavage.</text>
</comment>
<comment type="activity regulation">
    <text evidence="1">Target ssRNase is inhibited by EDTA.</text>
</comment>
<comment type="subunit">
    <text evidence="1 2 3 6 7">Part of the Csm effector complex that includes at least Cas10(1), Csm2(3), Csm3(5), Csm4(1), Csm5(1) and mature crRNA (PubMed:25458845, PubMed:27105119, PubMed:28663439). The Csm complex is elongated and slightly twisted with a maximal length of 215 Angstroms and a diameter of 75-80 Angstroms (PubMed:25458845). It has been modeled to have a central protein filamant of Csm3 subunits along which the dsRNA helix of paired crRNA and target RNA binds. The filament is capped at one end by Cas10 and Csm4 and at the other end by Csm5; ssDNA is thought to bind to the N-terminal HD domain of Cas10 (Probable). Csm with a precursor crRNA does not include Csm5, while Cas6, the enzyme probably involved in pre-crRNA processing, is found associated with a subset of the Csm complex (PubMed:25458845).</text>
</comment>
<comment type="miscellaneous">
    <text evidence="1">Encoded in a type III-A CRISPR locus.</text>
</comment>
<comment type="similarity">
    <text evidence="5">Belongs to the CRISPR-associated Csm3 family.</text>
</comment>
<keyword id="KW-0002">3D-structure</keyword>
<keyword id="KW-0051">Antiviral defense</keyword>
<keyword id="KW-0255">Endonuclease</keyword>
<keyword id="KW-0378">Hydrolase</keyword>
<keyword id="KW-0540">Nuclease</keyword>
<keyword id="KW-0694">RNA-binding</keyword>
<protein>
    <recommendedName>
        <fullName>CRISPR system Cms endoribonuclease Csm3</fullName>
        <shortName>Csm3 RNase</shortName>
        <ecNumber evidence="1">3.1.-.-</ecNumber>
    </recommendedName>
    <alternativeName>
        <fullName>CRISPR type III A-associated RAMP protein Csm3</fullName>
    </alternativeName>
</protein>
<accession>A0A0A7HIF0</accession>
<organism>
    <name type="scientific">Streptococcus thermophilus</name>
    <dbReference type="NCBI Taxonomy" id="1308"/>
    <lineage>
        <taxon>Bacteria</taxon>
        <taxon>Bacillati</taxon>
        <taxon>Bacillota</taxon>
        <taxon>Bacilli</taxon>
        <taxon>Lactobacillales</taxon>
        <taxon>Streptococcaceae</taxon>
        <taxon>Streptococcus</taxon>
    </lineage>
</organism>
<evidence type="ECO:0000269" key="1">
    <source>
    </source>
</evidence>
<evidence type="ECO:0000269" key="2">
    <source>
    </source>
</evidence>
<evidence type="ECO:0000269" key="3">
    <source>
    </source>
</evidence>
<evidence type="ECO:0000303" key="4">
    <source>
    </source>
</evidence>
<evidence type="ECO:0000305" key="5"/>
<evidence type="ECO:0000305" key="6">
    <source>
    </source>
</evidence>
<evidence type="ECO:0000305" key="7">
    <source>
    </source>
</evidence>
<evidence type="ECO:0007829" key="8">
    <source>
        <dbReference type="PDB" id="6NUD"/>
    </source>
</evidence>
<evidence type="ECO:0007829" key="9">
    <source>
        <dbReference type="PDB" id="6NUE"/>
    </source>
</evidence>
<reference key="1">
    <citation type="journal article" date="2014" name="Mol. Cell">
        <title>Programmable RNA shredding by the type III-A CRISPR-Cas system of Streptococcus thermophilus.</title>
        <authorList>
            <person name="Tamulaitis G."/>
            <person name="Kazlauskiene M."/>
            <person name="Manakova E."/>
            <person name="Venclovas C."/>
            <person name="Nwokeoji A.O."/>
            <person name="Dickman M.J."/>
            <person name="Horvath P."/>
            <person name="Siksnys V."/>
        </authorList>
    </citation>
    <scope>NUCLEOTIDE SEQUENCE [GENOMIC DNA]</scope>
    <scope>FUNCTION IN PHAGE RESISTANCE</scope>
    <scope>TARGETS SSRNA</scope>
    <scope>FUNCTION AS AN ENDONUCLEASE</scope>
    <scope>COFACTOR</scope>
    <scope>ACTIVITY REGULATION</scope>
    <scope>SUBUNIT</scope>
    <scope>MUTAGENESIS OF HIS-19; ASP-33; ASP-100; GLU-119; GLU-123 AND GLU-139</scope>
    <scope>ANTIVIRAL DEFENSE</scope>
    <source>
        <strain>DGCC8004</strain>
    </source>
</reference>
<reference key="2">
    <citation type="journal article" date="2016" name="Mol. Cell">
        <title>Spatiotemporal control of type III-A CRISPR-Cas immunity: coupling DNA degradation with the target RNA recognition.</title>
        <authorList>
            <person name="Kazlauskiene M."/>
            <person name="Tamulaitis G."/>
            <person name="Kostiuk G."/>
            <person name="Venclovas C."/>
            <person name="Siksnys V."/>
        </authorList>
    </citation>
    <scope>FUNCTION</scope>
    <scope>COFACTOR</scope>
    <scope>SUBUNIT</scope>
    <scope>MUTAGENESIS OF ASP-33</scope>
    <source>
        <strain>DGCC8004</strain>
    </source>
</reference>
<reference key="3">
    <citation type="journal article" date="2017" name="Science">
        <title>A cyclic oligonucleotide signaling pathway in type III CRISPR-Cas systems.</title>
        <authorList>
            <person name="Kazlauskiene M."/>
            <person name="Kostiuk G."/>
            <person name="Venclovas C."/>
            <person name="Tamulaitis G."/>
            <person name="Siksnys V."/>
        </authorList>
    </citation>
    <scope>SUBUNIT</scope>
    <source>
        <strain>DGCC8004</strain>
    </source>
</reference>
<proteinExistence type="evidence at protein level"/>
<feature type="chain" id="PRO_0000446119" description="CRISPR system Cms endoribonuclease Csm3">
    <location>
        <begin position="1"/>
        <end position="220"/>
    </location>
</feature>
<feature type="mutagenesis site" description="Wild-type degradation of target ssRNA by the Csm complex." evidence="1">
    <original>H</original>
    <variation>A</variation>
    <location>
        <position position="19"/>
    </location>
</feature>
<feature type="mutagenesis site" description="No degradation of target ssRNA by the Csm complex, complex assembles normally and binds ssRNA. 10(3) to 10(4) decreased growth of an RNA phage in vivo. No change in ssDNase activity of the ternary Csm complex." evidence="1 2">
    <original>D</original>
    <variation>A</variation>
    <location>
        <position position="33"/>
    </location>
</feature>
<feature type="mutagenesis site" description="Nearly wild-type degradation of target ssRNA by the Csm complex, crRNA is shorter, Csm complex is altered." evidence="1">
    <original>D</original>
    <variation>A</variation>
    <location>
        <position position="100"/>
    </location>
</feature>
<feature type="mutagenesis site" description="Wild-type degradation of target ssRNA by the Csm complex." evidence="1">
    <original>E</original>
    <variation>A</variation>
    <location>
        <position position="119"/>
    </location>
</feature>
<feature type="mutagenesis site" description="Wild-type degradation of target ssRNA by the Csm complex." evidence="1">
    <original>E</original>
    <variation>A</variation>
    <location>
        <position position="123"/>
    </location>
</feature>
<feature type="mutagenesis site" description="Wild-type degradation of target ssRNA by the Csm complex." evidence="1">
    <original>E</original>
    <variation>A</variation>
    <location>
        <position position="139"/>
    </location>
</feature>
<feature type="strand" evidence="9">
    <location>
        <begin position="5"/>
        <end position="16"/>
    </location>
</feature>
<feature type="strand" evidence="9">
    <location>
        <begin position="23"/>
        <end position="25"/>
    </location>
</feature>
<feature type="strand" evidence="9">
    <location>
        <begin position="27"/>
        <end position="30"/>
    </location>
</feature>
<feature type="strand" evidence="9">
    <location>
        <begin position="40"/>
        <end position="42"/>
    </location>
</feature>
<feature type="helix" evidence="9">
    <location>
        <begin position="50"/>
        <end position="60"/>
    </location>
</feature>
<feature type="turn" evidence="9">
    <location>
        <begin position="61"/>
        <end position="63"/>
    </location>
</feature>
<feature type="strand" evidence="8">
    <location>
        <begin position="70"/>
        <end position="73"/>
    </location>
</feature>
<feature type="turn" evidence="9">
    <location>
        <begin position="77"/>
        <end position="79"/>
    </location>
</feature>
<feature type="helix" evidence="9">
    <location>
        <begin position="80"/>
        <end position="83"/>
    </location>
</feature>
<feature type="strand" evidence="9">
    <location>
        <begin position="95"/>
        <end position="97"/>
    </location>
</feature>
<feature type="helix" evidence="9">
    <location>
        <begin position="105"/>
        <end position="107"/>
    </location>
</feature>
<feature type="helix" evidence="9">
    <location>
        <begin position="109"/>
        <end position="112"/>
    </location>
</feature>
<feature type="strand" evidence="9">
    <location>
        <begin position="117"/>
        <end position="122"/>
    </location>
</feature>
<feature type="strand" evidence="9">
    <location>
        <begin position="128"/>
        <end position="133"/>
    </location>
</feature>
<feature type="strand" evidence="9">
    <location>
        <begin position="137"/>
        <end position="141"/>
    </location>
</feature>
<feature type="strand" evidence="9">
    <location>
        <begin position="149"/>
        <end position="154"/>
    </location>
</feature>
<feature type="helix" evidence="9">
    <location>
        <begin position="163"/>
        <end position="177"/>
    </location>
</feature>
<feature type="strand" evidence="9">
    <location>
        <begin position="183"/>
        <end position="185"/>
    </location>
</feature>
<feature type="strand" evidence="8">
    <location>
        <begin position="187"/>
        <end position="189"/>
    </location>
</feature>
<feature type="strand" evidence="9">
    <location>
        <begin position="193"/>
        <end position="204"/>
    </location>
</feature>